<organism>
    <name type="scientific">Vanderwaltozyma polyspora (strain ATCC 22028 / DSM 70294 / BCRC 21397 / CBS 2163 / NBRC 10782 / NRRL Y-8283 / UCD 57-17)</name>
    <name type="common">Kluyveromyces polysporus</name>
    <dbReference type="NCBI Taxonomy" id="436907"/>
    <lineage>
        <taxon>Eukaryota</taxon>
        <taxon>Fungi</taxon>
        <taxon>Dikarya</taxon>
        <taxon>Ascomycota</taxon>
        <taxon>Saccharomycotina</taxon>
        <taxon>Saccharomycetes</taxon>
        <taxon>Saccharomycetales</taxon>
        <taxon>Saccharomycetaceae</taxon>
        <taxon>Vanderwaltozyma</taxon>
    </lineage>
</organism>
<evidence type="ECO:0000250" key="1"/>
<evidence type="ECO:0000255" key="2"/>
<evidence type="ECO:0000305" key="3"/>
<name>BL1S4_VANPO</name>
<comment type="function">
    <text evidence="1">Component of the biogenesis of lysosome-related organelles complex-1 (BLOC-1), a complex that is involved in endosomal cargo sorting.</text>
</comment>
<comment type="subunit">
    <text evidence="1">Component of the biogenesis of lysosome-related organelles complex-1 (BLOC-1).</text>
</comment>
<comment type="subcellular location">
    <subcellularLocation>
        <location evidence="1">Cytoplasm</location>
    </subcellularLocation>
    <text evidence="1">Punctate pattern.</text>
</comment>
<comment type="similarity">
    <text evidence="3">Belongs to the BLOC1S4 family.</text>
</comment>
<reference key="1">
    <citation type="journal article" date="2007" name="Proc. Natl. Acad. Sci. U.S.A.">
        <title>Independent sorting-out of thousands of duplicated gene pairs in two yeast species descended from a whole-genome duplication.</title>
        <authorList>
            <person name="Scannell D.R."/>
            <person name="Frank A.C."/>
            <person name="Conant G.C."/>
            <person name="Byrne K.P."/>
            <person name="Woolfit M."/>
            <person name="Wolfe K.H."/>
        </authorList>
    </citation>
    <scope>NUCLEOTIDE SEQUENCE [LARGE SCALE GENOMIC DNA]</scope>
    <source>
        <strain>ATCC 22028 / DSM 70294 / BCRC 21397 / CBS 2163 / NBRC 10782 / NRRL Y-8283 / UCD 57-17</strain>
    </source>
</reference>
<proteinExistence type="inferred from homology"/>
<accession>A7THV0</accession>
<gene>
    <name type="primary">CLN1</name>
    <name type="ORF">Kpol_1031p16</name>
</gene>
<dbReference type="EMBL" id="DS480393">
    <property type="protein sequence ID" value="EDO18112.1"/>
    <property type="molecule type" value="Genomic_DNA"/>
</dbReference>
<dbReference type="RefSeq" id="XP_001645970.1">
    <property type="nucleotide sequence ID" value="XM_001645920.1"/>
</dbReference>
<dbReference type="SMR" id="A7THV0"/>
<dbReference type="FunCoup" id="A7THV0">
    <property type="interactions" value="35"/>
</dbReference>
<dbReference type="STRING" id="436907.A7THV0"/>
<dbReference type="GeneID" id="5546382"/>
<dbReference type="KEGG" id="vpo:Kpol_1031p16"/>
<dbReference type="eggNOG" id="ENOG502S4DQ">
    <property type="taxonomic scope" value="Eukaryota"/>
</dbReference>
<dbReference type="HOGENOM" id="CLU_141728_1_0_1"/>
<dbReference type="InParanoid" id="A7THV0"/>
<dbReference type="OMA" id="HFDMLDQ"/>
<dbReference type="OrthoDB" id="5424991at2759"/>
<dbReference type="PhylomeDB" id="A7THV0"/>
<dbReference type="Proteomes" id="UP000000267">
    <property type="component" value="Unassembled WGS sequence"/>
</dbReference>
<dbReference type="GO" id="GO:0031083">
    <property type="term" value="C:BLOC-1 complex"/>
    <property type="evidence" value="ECO:0007669"/>
    <property type="project" value="EnsemblFungi"/>
</dbReference>
<dbReference type="GO" id="GO:0005768">
    <property type="term" value="C:endosome"/>
    <property type="evidence" value="ECO:0007669"/>
    <property type="project" value="EnsemblFungi"/>
</dbReference>
<dbReference type="GO" id="GO:0007032">
    <property type="term" value="P:endosome organization"/>
    <property type="evidence" value="ECO:0007669"/>
    <property type="project" value="EnsemblFungi"/>
</dbReference>
<dbReference type="GO" id="GO:0032880">
    <property type="term" value="P:regulation of protein localization"/>
    <property type="evidence" value="ECO:0007669"/>
    <property type="project" value="EnsemblFungi"/>
</dbReference>
<dbReference type="CDD" id="cd24144">
    <property type="entry name" value="BLOC1_CNL1"/>
    <property type="match status" value="1"/>
</dbReference>
<dbReference type="InterPro" id="IPR034455">
    <property type="entry name" value="CNL1"/>
</dbReference>
<dbReference type="PANTHER" id="PTHR39145">
    <property type="entry name" value="BIOGENESIS OF LYSOSOME-RELATED ORGANELLES COMPLEX 1 SUBUNIT CNL1"/>
    <property type="match status" value="1"/>
</dbReference>
<dbReference type="PANTHER" id="PTHR39145:SF1">
    <property type="entry name" value="BIOGENESIS OF LYSOSOME-RELATED ORGANELLES COMPLEX 1 SUBUNIT CNL1"/>
    <property type="match status" value="1"/>
</dbReference>
<feature type="chain" id="PRO_0000410645" description="Biogenesis of lysosome-related organelles complex 1 subunit CNL1">
    <location>
        <begin position="1"/>
        <end position="116"/>
    </location>
</feature>
<feature type="coiled-coil region" evidence="2">
    <location>
        <begin position="63"/>
        <end position="95"/>
    </location>
</feature>
<protein>
    <recommendedName>
        <fullName>Biogenesis of lysosome-related organelles complex 1 subunit CNL1</fullName>
        <shortName>BLOC-1 subunit CNL1</shortName>
    </recommendedName>
    <alternativeName>
        <fullName>CNO-like protein 1</fullName>
    </alternativeName>
</protein>
<keyword id="KW-0175">Coiled coil</keyword>
<keyword id="KW-0963">Cytoplasm</keyword>
<keyword id="KW-1185">Reference proteome</keyword>
<keyword id="KW-0813">Transport</keyword>
<sequence>MSSSKGDEEINSNNEEMLGIDKLSVDYDYLLYKINDYVNSIQIQTKEVCQRQNELISQNVVEDIVDVNIQSFKDILSKCEELENYFTMLDQIEMISDTFHGRIDDVLKEYRKLNGN</sequence>